<keyword id="KW-0028">Amino-acid biosynthesis</keyword>
<keyword id="KW-0067">ATP-binding</keyword>
<keyword id="KW-0963">Cytoplasm</keyword>
<keyword id="KW-0328">Glycosyltransferase</keyword>
<keyword id="KW-0368">Histidine biosynthesis</keyword>
<keyword id="KW-0460">Magnesium</keyword>
<keyword id="KW-0479">Metal-binding</keyword>
<keyword id="KW-0547">Nucleotide-binding</keyword>
<keyword id="KW-1185">Reference proteome</keyword>
<keyword id="KW-0808">Transferase</keyword>
<accession>Q8TU56</accession>
<feature type="chain" id="PRO_0000151881" description="ATP phosphoribosyltransferase">
    <location>
        <begin position="1"/>
        <end position="289"/>
    </location>
</feature>
<reference key="1">
    <citation type="journal article" date="2002" name="Genome Res.">
        <title>The genome of Methanosarcina acetivorans reveals extensive metabolic and physiological diversity.</title>
        <authorList>
            <person name="Galagan J.E."/>
            <person name="Nusbaum C."/>
            <person name="Roy A."/>
            <person name="Endrizzi M.G."/>
            <person name="Macdonald P."/>
            <person name="FitzHugh W."/>
            <person name="Calvo S."/>
            <person name="Engels R."/>
            <person name="Smirnov S."/>
            <person name="Atnoor D."/>
            <person name="Brown A."/>
            <person name="Allen N."/>
            <person name="Naylor J."/>
            <person name="Stange-Thomann N."/>
            <person name="DeArellano K."/>
            <person name="Johnson R."/>
            <person name="Linton L."/>
            <person name="McEwan P."/>
            <person name="McKernan K."/>
            <person name="Talamas J."/>
            <person name="Tirrell A."/>
            <person name="Ye W."/>
            <person name="Zimmer A."/>
            <person name="Barber R.D."/>
            <person name="Cann I."/>
            <person name="Graham D.E."/>
            <person name="Grahame D.A."/>
            <person name="Guss A.M."/>
            <person name="Hedderich R."/>
            <person name="Ingram-Smith C."/>
            <person name="Kuettner H.C."/>
            <person name="Krzycki J.A."/>
            <person name="Leigh J.A."/>
            <person name="Li W."/>
            <person name="Liu J."/>
            <person name="Mukhopadhyay B."/>
            <person name="Reeve J.N."/>
            <person name="Smith K."/>
            <person name="Springer T.A."/>
            <person name="Umayam L.A."/>
            <person name="White O."/>
            <person name="White R.H."/>
            <person name="de Macario E.C."/>
            <person name="Ferry J.G."/>
            <person name="Jarrell K.F."/>
            <person name="Jing H."/>
            <person name="Macario A.J.L."/>
            <person name="Paulsen I.T."/>
            <person name="Pritchett M."/>
            <person name="Sowers K.R."/>
            <person name="Swanson R.V."/>
            <person name="Zinder S.H."/>
            <person name="Lander E."/>
            <person name="Metcalf W.W."/>
            <person name="Birren B."/>
        </authorList>
    </citation>
    <scope>NUCLEOTIDE SEQUENCE [LARGE SCALE GENOMIC DNA]</scope>
    <source>
        <strain>ATCC 35395 / DSM 2834 / JCM 12185 / C2A</strain>
    </source>
</reference>
<evidence type="ECO:0000255" key="1">
    <source>
        <dbReference type="HAMAP-Rule" id="MF_00079"/>
    </source>
</evidence>
<dbReference type="EC" id="2.4.2.17" evidence="1"/>
<dbReference type="EMBL" id="AE010299">
    <property type="protein sequence ID" value="AAM03670.1"/>
    <property type="molecule type" value="Genomic_DNA"/>
</dbReference>
<dbReference type="RefSeq" id="WP_011020275.1">
    <property type="nucleotide sequence ID" value="NC_003552.1"/>
</dbReference>
<dbReference type="SMR" id="Q8TU56"/>
<dbReference type="FunCoup" id="Q8TU56">
    <property type="interactions" value="160"/>
</dbReference>
<dbReference type="STRING" id="188937.MA_0217"/>
<dbReference type="EnsemblBacteria" id="AAM03670">
    <property type="protein sequence ID" value="AAM03670"/>
    <property type="gene ID" value="MA_0217"/>
</dbReference>
<dbReference type="GeneID" id="1472109"/>
<dbReference type="KEGG" id="mac:MA_0217"/>
<dbReference type="HOGENOM" id="CLU_038115_1_0_2"/>
<dbReference type="InParanoid" id="Q8TU56"/>
<dbReference type="OrthoDB" id="33116at2157"/>
<dbReference type="PhylomeDB" id="Q8TU56"/>
<dbReference type="UniPathway" id="UPA00031">
    <property type="reaction ID" value="UER00006"/>
</dbReference>
<dbReference type="Proteomes" id="UP000002487">
    <property type="component" value="Chromosome"/>
</dbReference>
<dbReference type="GO" id="GO:0005737">
    <property type="term" value="C:cytoplasm"/>
    <property type="evidence" value="ECO:0007669"/>
    <property type="project" value="UniProtKB-SubCell"/>
</dbReference>
<dbReference type="GO" id="GO:0005524">
    <property type="term" value="F:ATP binding"/>
    <property type="evidence" value="ECO:0007669"/>
    <property type="project" value="UniProtKB-KW"/>
</dbReference>
<dbReference type="GO" id="GO:0003879">
    <property type="term" value="F:ATP phosphoribosyltransferase activity"/>
    <property type="evidence" value="ECO:0000318"/>
    <property type="project" value="GO_Central"/>
</dbReference>
<dbReference type="GO" id="GO:0000287">
    <property type="term" value="F:magnesium ion binding"/>
    <property type="evidence" value="ECO:0007669"/>
    <property type="project" value="UniProtKB-UniRule"/>
</dbReference>
<dbReference type="GO" id="GO:0000105">
    <property type="term" value="P:L-histidine biosynthetic process"/>
    <property type="evidence" value="ECO:0000318"/>
    <property type="project" value="GO_Central"/>
</dbReference>
<dbReference type="CDD" id="cd13594">
    <property type="entry name" value="PBP2_HisGL4"/>
    <property type="match status" value="1"/>
</dbReference>
<dbReference type="FunFam" id="3.30.70.120:FF:000002">
    <property type="entry name" value="ATP phosphoribosyltransferase"/>
    <property type="match status" value="1"/>
</dbReference>
<dbReference type="FunFam" id="3.40.190.10:FF:000082">
    <property type="entry name" value="ATP phosphoribosyltransferase"/>
    <property type="match status" value="1"/>
</dbReference>
<dbReference type="Gene3D" id="3.30.70.120">
    <property type="match status" value="1"/>
</dbReference>
<dbReference type="Gene3D" id="3.40.190.10">
    <property type="entry name" value="Periplasmic binding protein-like II"/>
    <property type="match status" value="2"/>
</dbReference>
<dbReference type="HAMAP" id="MF_00079">
    <property type="entry name" value="HisG_Long"/>
    <property type="match status" value="1"/>
</dbReference>
<dbReference type="InterPro" id="IPR020621">
    <property type="entry name" value="ATP-PRT_HisG_long"/>
</dbReference>
<dbReference type="InterPro" id="IPR013820">
    <property type="entry name" value="ATP_PRibTrfase_cat"/>
</dbReference>
<dbReference type="InterPro" id="IPR018198">
    <property type="entry name" value="ATP_PRibTrfase_CS"/>
</dbReference>
<dbReference type="InterPro" id="IPR001348">
    <property type="entry name" value="ATP_PRibTrfase_HisG"/>
</dbReference>
<dbReference type="InterPro" id="IPR013115">
    <property type="entry name" value="HisG_C"/>
</dbReference>
<dbReference type="InterPro" id="IPR011322">
    <property type="entry name" value="N-reg_PII-like_a/b"/>
</dbReference>
<dbReference type="InterPro" id="IPR015867">
    <property type="entry name" value="N-reg_PII/ATP_PRibTrfase_C"/>
</dbReference>
<dbReference type="NCBIfam" id="TIGR00070">
    <property type="entry name" value="hisG"/>
    <property type="match status" value="1"/>
</dbReference>
<dbReference type="NCBIfam" id="TIGR03455">
    <property type="entry name" value="HisG_C-term"/>
    <property type="match status" value="1"/>
</dbReference>
<dbReference type="PANTHER" id="PTHR21403:SF10">
    <property type="entry name" value="ATP PHOSPHORIBOSYLTRANSFERASE"/>
    <property type="match status" value="1"/>
</dbReference>
<dbReference type="PANTHER" id="PTHR21403">
    <property type="entry name" value="ATP PHOSPHORIBOSYLTRANSFERASE ATP-PRTASE"/>
    <property type="match status" value="1"/>
</dbReference>
<dbReference type="Pfam" id="PF01634">
    <property type="entry name" value="HisG"/>
    <property type="match status" value="1"/>
</dbReference>
<dbReference type="Pfam" id="PF08029">
    <property type="entry name" value="HisG_C"/>
    <property type="match status" value="1"/>
</dbReference>
<dbReference type="SUPFAM" id="SSF54913">
    <property type="entry name" value="GlnB-like"/>
    <property type="match status" value="1"/>
</dbReference>
<dbReference type="SUPFAM" id="SSF53850">
    <property type="entry name" value="Periplasmic binding protein-like II"/>
    <property type="match status" value="1"/>
</dbReference>
<dbReference type="PROSITE" id="PS01316">
    <property type="entry name" value="ATP_P_PHORIBOSYLTR"/>
    <property type="match status" value="1"/>
</dbReference>
<sequence>MIRIAIPNKGRLHEPTMSLFKDAGLPISGGAESRILFAKTTDPDIHILFARAADIPEYVQDGAADVGVTGMDLITERGADVEALLDLKYGKASLVLAVPEESVFQSARDLEGKKVATEFPEITRQYFKNLGITVEVITVSGACEMTPHVGIADAIVDISSSGTTLLINHLKAIDTVFSSTVHLIANKKSLKEKGKILDIKTALESVLNAKKKRYLMMNVPEASLQAVKEVLPGMSGPTVMKVESSRSSEESFLAVHSVVDADLIFTIVNKLKNVGARDILVVPIERIMP</sequence>
<protein>
    <recommendedName>
        <fullName evidence="1">ATP phosphoribosyltransferase</fullName>
        <shortName evidence="1">ATP-PRT</shortName>
        <shortName evidence="1">ATP-PRTase</shortName>
        <ecNumber evidence="1">2.4.2.17</ecNumber>
    </recommendedName>
</protein>
<proteinExistence type="inferred from homology"/>
<gene>
    <name evidence="1" type="primary">hisG</name>
    <name type="ordered locus">MA_0217</name>
</gene>
<name>HIS1_METAC</name>
<comment type="function">
    <text evidence="1">Catalyzes the condensation of ATP and 5-phosphoribose 1-diphosphate to form N'-(5'-phosphoribosyl)-ATP (PR-ATP). Has a crucial role in the pathway because the rate of histidine biosynthesis seems to be controlled primarily by regulation of HisG enzymatic activity.</text>
</comment>
<comment type="catalytic activity">
    <reaction evidence="1">
        <text>1-(5-phospho-beta-D-ribosyl)-ATP + diphosphate = 5-phospho-alpha-D-ribose 1-diphosphate + ATP</text>
        <dbReference type="Rhea" id="RHEA:18473"/>
        <dbReference type="ChEBI" id="CHEBI:30616"/>
        <dbReference type="ChEBI" id="CHEBI:33019"/>
        <dbReference type="ChEBI" id="CHEBI:58017"/>
        <dbReference type="ChEBI" id="CHEBI:73183"/>
        <dbReference type="EC" id="2.4.2.17"/>
    </reaction>
</comment>
<comment type="cofactor">
    <cofactor evidence="1">
        <name>Mg(2+)</name>
        <dbReference type="ChEBI" id="CHEBI:18420"/>
    </cofactor>
</comment>
<comment type="activity regulation">
    <text evidence="1">Feedback inhibited by histidine.</text>
</comment>
<comment type="pathway">
    <text evidence="1">Amino-acid biosynthesis; L-histidine biosynthesis; L-histidine from 5-phospho-alpha-D-ribose 1-diphosphate: step 1/9.</text>
</comment>
<comment type="subcellular location">
    <subcellularLocation>
        <location evidence="1">Cytoplasm</location>
    </subcellularLocation>
</comment>
<comment type="similarity">
    <text evidence="1">Belongs to the ATP phosphoribosyltransferase family. Long subfamily.</text>
</comment>
<organism>
    <name type="scientific">Methanosarcina acetivorans (strain ATCC 35395 / DSM 2834 / JCM 12185 / C2A)</name>
    <dbReference type="NCBI Taxonomy" id="188937"/>
    <lineage>
        <taxon>Archaea</taxon>
        <taxon>Methanobacteriati</taxon>
        <taxon>Methanobacteriota</taxon>
        <taxon>Stenosarchaea group</taxon>
        <taxon>Methanomicrobia</taxon>
        <taxon>Methanosarcinales</taxon>
        <taxon>Methanosarcinaceae</taxon>
        <taxon>Methanosarcina</taxon>
    </lineage>
</organism>